<organism>
    <name type="scientific">Pyrobaculum islandicum (strain DSM 4184 / JCM 9189 / GEO3)</name>
    <dbReference type="NCBI Taxonomy" id="384616"/>
    <lineage>
        <taxon>Archaea</taxon>
        <taxon>Thermoproteota</taxon>
        <taxon>Thermoprotei</taxon>
        <taxon>Thermoproteales</taxon>
        <taxon>Thermoproteaceae</taxon>
        <taxon>Pyrobaculum</taxon>
    </lineage>
</organism>
<name>ARCH_PYRIL</name>
<dbReference type="EMBL" id="CP000504">
    <property type="protein sequence ID" value="ABL88836.1"/>
    <property type="molecule type" value="Genomic_DNA"/>
</dbReference>
<dbReference type="RefSeq" id="WP_011763411.1">
    <property type="nucleotide sequence ID" value="NC_008701.1"/>
</dbReference>
<dbReference type="SMR" id="A1RV54"/>
<dbReference type="STRING" id="384616.Pisl_1685"/>
<dbReference type="GeneID" id="4617781"/>
<dbReference type="KEGG" id="pis:Pisl_1685"/>
<dbReference type="eggNOG" id="arCOG04055">
    <property type="taxonomic scope" value="Archaea"/>
</dbReference>
<dbReference type="HOGENOM" id="CLU_111362_3_0_2"/>
<dbReference type="OrthoDB" id="8831at2157"/>
<dbReference type="Proteomes" id="UP000002595">
    <property type="component" value="Chromosome"/>
</dbReference>
<dbReference type="GO" id="GO:0005509">
    <property type="term" value="F:calcium ion binding"/>
    <property type="evidence" value="ECO:0007669"/>
    <property type="project" value="UniProtKB-UniRule"/>
</dbReference>
<dbReference type="GO" id="GO:0006388">
    <property type="term" value="P:tRNA splicing, via endonucleolytic cleavage and ligation"/>
    <property type="evidence" value="ECO:0007669"/>
    <property type="project" value="UniProtKB-UniRule"/>
</dbReference>
<dbReference type="Gene3D" id="3.55.10.10">
    <property type="entry name" value="Archease domain"/>
    <property type="match status" value="1"/>
</dbReference>
<dbReference type="HAMAP" id="MF_01222">
    <property type="entry name" value="Archease_arch"/>
    <property type="match status" value="1"/>
</dbReference>
<dbReference type="InterPro" id="IPR002804">
    <property type="entry name" value="Archease"/>
</dbReference>
<dbReference type="InterPro" id="IPR022952">
    <property type="entry name" value="Archease_arc"/>
</dbReference>
<dbReference type="InterPro" id="IPR023572">
    <property type="entry name" value="Archease_dom"/>
</dbReference>
<dbReference type="InterPro" id="IPR036820">
    <property type="entry name" value="Archease_dom_sf"/>
</dbReference>
<dbReference type="NCBIfam" id="NF001617">
    <property type="entry name" value="PRK00407.1"/>
    <property type="match status" value="1"/>
</dbReference>
<dbReference type="PANTHER" id="PTHR12682">
    <property type="entry name" value="ARCHEASE"/>
    <property type="match status" value="1"/>
</dbReference>
<dbReference type="PANTHER" id="PTHR12682:SF11">
    <property type="entry name" value="PROTEIN ARCHEASE"/>
    <property type="match status" value="1"/>
</dbReference>
<dbReference type="Pfam" id="PF01951">
    <property type="entry name" value="Archease"/>
    <property type="match status" value="1"/>
</dbReference>
<dbReference type="SUPFAM" id="SSF69819">
    <property type="entry name" value="MTH1598-like"/>
    <property type="match status" value="1"/>
</dbReference>
<comment type="function">
    <text evidence="1">Activates the tRNA-splicing ligase complex by facilitating the enzymatic turnover of catalytic subunit RtcB. Acts by promoting the guanylylation of RtcB, a key intermediate step in tRNA ligation. Can also alter the NTP specificity of RtcB such that ATP, dGTP or ITP is used efficiently (By similarity).</text>
</comment>
<comment type="similarity">
    <text evidence="2">Belongs to the archease family.</text>
</comment>
<sequence>MKCGKPVDYRYGEHTADVLIQAYGCTLEEAFKNAAIALAELTYHTEKVEPRYAKEITIDYNDLEGLLFRWIDELLFLFDTEKFAISREIVLNLGKNDVYYIKAVLYGEPYDIEKHGFTGLIVKAMTFHMMEIRQIDDYWMLQYVVDV</sequence>
<reference key="1">
    <citation type="submission" date="2006-12" db="EMBL/GenBank/DDBJ databases">
        <title>Complete sequence of Pyrobaculum islandicum DSM 4184.</title>
        <authorList>
            <person name="Copeland A."/>
            <person name="Lucas S."/>
            <person name="Lapidus A."/>
            <person name="Barry K."/>
            <person name="Detter J.C."/>
            <person name="Glavina del Rio T."/>
            <person name="Dalin E."/>
            <person name="Tice H."/>
            <person name="Pitluck S."/>
            <person name="Meincke L."/>
            <person name="Brettin T."/>
            <person name="Bruce D."/>
            <person name="Han C."/>
            <person name="Tapia R."/>
            <person name="Gilna P."/>
            <person name="Schmutz J."/>
            <person name="Larimer F."/>
            <person name="Land M."/>
            <person name="Hauser L."/>
            <person name="Kyrpides N."/>
            <person name="Mikhailova N."/>
            <person name="Cozen A.E."/>
            <person name="Fitz-Gibbon S.T."/>
            <person name="House C.H."/>
            <person name="Saltikov C."/>
            <person name="Lowe T."/>
            <person name="Richardson P."/>
        </authorList>
    </citation>
    <scope>NUCLEOTIDE SEQUENCE [LARGE SCALE GENOMIC DNA]</scope>
    <source>
        <strain>DSM 4184 / JCM 9189 / GEO3</strain>
    </source>
</reference>
<feature type="chain" id="PRO_1000066783" description="Protein archease">
    <location>
        <begin position="1"/>
        <end position="147"/>
    </location>
</feature>
<feature type="binding site" evidence="1">
    <location>
        <position position="17"/>
    </location>
    <ligand>
        <name>Ca(2+)</name>
        <dbReference type="ChEBI" id="CHEBI:29108"/>
    </ligand>
</feature>
<feature type="binding site" evidence="1">
    <location>
        <position position="146"/>
    </location>
    <ligand>
        <name>Ca(2+)</name>
        <dbReference type="ChEBI" id="CHEBI:29108"/>
    </ligand>
</feature>
<feature type="binding site" evidence="1">
    <location>
        <position position="147"/>
    </location>
    <ligand>
        <name>Ca(2+)</name>
        <dbReference type="ChEBI" id="CHEBI:29108"/>
    </ligand>
</feature>
<accession>A1RV54</accession>
<protein>
    <recommendedName>
        <fullName evidence="2">Protein archease</fullName>
    </recommendedName>
</protein>
<proteinExistence type="inferred from homology"/>
<keyword id="KW-0106">Calcium</keyword>
<keyword id="KW-0479">Metal-binding</keyword>
<keyword id="KW-0819">tRNA processing</keyword>
<gene>
    <name type="ordered locus">Pisl_1685</name>
</gene>
<evidence type="ECO:0000250" key="1"/>
<evidence type="ECO:0000255" key="2">
    <source>
        <dbReference type="HAMAP-Rule" id="MF_01222"/>
    </source>
</evidence>